<feature type="chain" id="PRO_0000221626" description="Peroxiredoxin-like 2C">
    <location>
        <begin position="1"/>
        <end position="226"/>
    </location>
</feature>
<evidence type="ECO:0000305" key="1"/>
<accession>Q8AV19</accession>
<name>PXL2C_TAKRU</name>
<proteinExistence type="inferred from homology"/>
<dbReference type="EMBL" id="U90880">
    <property type="protein sequence ID" value="AAN10163.1"/>
    <property type="molecule type" value="Genomic_DNA"/>
</dbReference>
<dbReference type="STRING" id="31033.ENSTRUP00000038830"/>
<dbReference type="eggNOG" id="KOG4498">
    <property type="taxonomic scope" value="Eukaryota"/>
</dbReference>
<dbReference type="InParanoid" id="Q8AV19"/>
<dbReference type="Proteomes" id="UP000005226">
    <property type="component" value="Unplaced"/>
</dbReference>
<dbReference type="CDD" id="cd02970">
    <property type="entry name" value="PRX_like2"/>
    <property type="match status" value="1"/>
</dbReference>
<dbReference type="Gene3D" id="3.40.30.10">
    <property type="entry name" value="Glutaredoxin"/>
    <property type="match status" value="1"/>
</dbReference>
<dbReference type="InterPro" id="IPR032801">
    <property type="entry name" value="PXL2A/B/C"/>
</dbReference>
<dbReference type="InterPro" id="IPR036249">
    <property type="entry name" value="Thioredoxin-like_sf"/>
</dbReference>
<dbReference type="PANTHER" id="PTHR28630">
    <property type="match status" value="1"/>
</dbReference>
<dbReference type="PANTHER" id="PTHR28630:SF3">
    <property type="entry name" value="PEROXIREDOXIN-LIKE 2C"/>
    <property type="match status" value="1"/>
</dbReference>
<dbReference type="Pfam" id="PF13911">
    <property type="entry name" value="AhpC-TSA_2"/>
    <property type="match status" value="1"/>
</dbReference>
<dbReference type="SUPFAM" id="SSF52833">
    <property type="entry name" value="Thioredoxin-like"/>
    <property type="match status" value="1"/>
</dbReference>
<keyword id="KW-1185">Reference proteome</keyword>
<comment type="similarity">
    <text evidence="1">Belongs to the peroxiredoxin-like PRXL2 family. PRXL2C subfamily.</text>
</comment>
<reference key="1">
    <citation type="journal article" date="1997" name="Proc. Natl. Acad. Sci. U.S.A.">
        <title>Transgenic rats reveal functional conservation of regulatory controls between the Fugu isotocin and rat oxytocin genes.</title>
        <authorList>
            <person name="Venkatesh B."/>
            <person name="Si-Hoe S.L."/>
            <person name="Murphy D."/>
            <person name="Brenner S."/>
        </authorList>
    </citation>
    <scope>NUCLEOTIDE SEQUENCE [GENOMIC DNA]</scope>
</reference>
<reference key="2">
    <citation type="journal article" date="2002" name="Gene">
        <title>Fugu and human sequence comparison identifies novel human genes and conserved non-coding sequences.</title>
        <authorList>
            <person name="Gilligan P."/>
            <person name="Brenner S."/>
            <person name="Venkatesh B."/>
        </authorList>
    </citation>
    <scope>IDENTIFICATION</scope>
</reference>
<protein>
    <recommendedName>
        <fullName>Peroxiredoxin-like 2C</fullName>
    </recommendedName>
    <alternativeName>
        <fullName>AhpC/TSA antioxidant enzyme domain-containing protein 1</fullName>
    </alternativeName>
    <alternativeName>
        <fullName>Thioredoxin-like protein AAED1</fullName>
    </alternativeName>
    <alternativeName>
        <fullName>fmHP</fullName>
    </alternativeName>
</protein>
<organism>
    <name type="scientific">Takifugu rubripes</name>
    <name type="common">Japanese pufferfish</name>
    <name type="synonym">Fugu rubripes</name>
    <dbReference type="NCBI Taxonomy" id="31033"/>
    <lineage>
        <taxon>Eukaryota</taxon>
        <taxon>Metazoa</taxon>
        <taxon>Chordata</taxon>
        <taxon>Craniata</taxon>
        <taxon>Vertebrata</taxon>
        <taxon>Euteleostomi</taxon>
        <taxon>Actinopterygii</taxon>
        <taxon>Neopterygii</taxon>
        <taxon>Teleostei</taxon>
        <taxon>Neoteleostei</taxon>
        <taxon>Acanthomorphata</taxon>
        <taxon>Eupercaria</taxon>
        <taxon>Tetraodontiformes</taxon>
        <taxon>Tetradontoidea</taxon>
        <taxon>Tetraodontidae</taxon>
        <taxon>Takifugu</taxon>
    </lineage>
</organism>
<gene>
    <name type="primary">prxl2c</name>
    <name type="synonym">aaed1</name>
</gene>
<sequence>MAAVLSPITRQVSKEPRELQRVCVDIRLEDVQDCLVYDRRGGSVPFKNLYQHTKSVIIFVRNFLCYACKEYVEDLSKIPEDVFEGKVLGIRLIVIGQSMHHHIEAFCTLTGYPYEIYVDPDRHIYQKLGMKREETFTDSAQPSPHVKSGIFAGQMKSIWRAMTGPIFDFQGDLHQQGGAIIVGPGAQVHFCHFDTNRLDHMPINWLLQLAGVQQTLDFSKPKIMHV</sequence>